<protein>
    <recommendedName>
        <fullName evidence="1">Bifunctional purine biosynthesis protein PurH</fullName>
    </recommendedName>
    <domain>
        <recommendedName>
            <fullName evidence="1">Phosphoribosylaminoimidazolecarboxamide formyltransferase</fullName>
            <ecNumber evidence="1">2.1.2.3</ecNumber>
        </recommendedName>
        <alternativeName>
            <fullName evidence="1">AICAR transformylase</fullName>
        </alternativeName>
    </domain>
    <domain>
        <recommendedName>
            <fullName evidence="1">IMP cyclohydrolase</fullName>
            <ecNumber evidence="1">3.5.4.10</ecNumber>
        </recommendedName>
        <alternativeName>
            <fullName evidence="1">ATIC</fullName>
        </alternativeName>
        <alternativeName>
            <fullName evidence="1">IMP synthase</fullName>
        </alternativeName>
        <alternativeName>
            <fullName evidence="1">Inosinicase</fullName>
        </alternativeName>
    </domain>
</protein>
<proteinExistence type="inferred from homology"/>
<organism>
    <name type="scientific">Yersinia pestis bv. Antiqua (strain Antiqua)</name>
    <dbReference type="NCBI Taxonomy" id="360102"/>
    <lineage>
        <taxon>Bacteria</taxon>
        <taxon>Pseudomonadati</taxon>
        <taxon>Pseudomonadota</taxon>
        <taxon>Gammaproteobacteria</taxon>
        <taxon>Enterobacterales</taxon>
        <taxon>Yersiniaceae</taxon>
        <taxon>Yersinia</taxon>
    </lineage>
</organism>
<reference key="1">
    <citation type="journal article" date="2006" name="J. Bacteriol.">
        <title>Complete genome sequence of Yersinia pestis strains Antiqua and Nepal516: evidence of gene reduction in an emerging pathogen.</title>
        <authorList>
            <person name="Chain P.S.G."/>
            <person name="Hu P."/>
            <person name="Malfatti S.A."/>
            <person name="Radnedge L."/>
            <person name="Larimer F."/>
            <person name="Vergez L.M."/>
            <person name="Worsham P."/>
            <person name="Chu M.C."/>
            <person name="Andersen G.L."/>
        </authorList>
    </citation>
    <scope>NUCLEOTIDE SEQUENCE [LARGE SCALE GENOMIC DNA]</scope>
    <source>
        <strain>Antiqua</strain>
    </source>
</reference>
<name>PUR9_YERPA</name>
<keyword id="KW-0378">Hydrolase</keyword>
<keyword id="KW-0511">Multifunctional enzyme</keyword>
<keyword id="KW-0658">Purine biosynthesis</keyword>
<keyword id="KW-0808">Transferase</keyword>
<accession>Q1C1V9</accession>
<gene>
    <name evidence="1" type="primary">purH</name>
    <name type="ordered locus">YPA_3601</name>
</gene>
<feature type="chain" id="PRO_1000018991" description="Bifunctional purine biosynthesis protein PurH">
    <location>
        <begin position="1"/>
        <end position="529"/>
    </location>
</feature>
<feature type="domain" description="MGS-like" evidence="2">
    <location>
        <begin position="1"/>
        <end position="148"/>
    </location>
</feature>
<evidence type="ECO:0000255" key="1">
    <source>
        <dbReference type="HAMAP-Rule" id="MF_00139"/>
    </source>
</evidence>
<evidence type="ECO:0000255" key="2">
    <source>
        <dbReference type="PROSITE-ProRule" id="PRU01202"/>
    </source>
</evidence>
<sequence>MQQRRPIRRALLSVSDKAGIIEFAQALSQRGIELLSTGGTARLLADAGLPVTEVSDYTGFPEMMDGRVKTLHPKVHGGILGRRGQDDGIMAQHGIQPIDIVVVNLYPFAQTVARPDCSLEDAVENIDIGGPTMVRSAAKNHKDVAIVVKSSDYPAIITELDNNDGSLTYPTRFNLAIKAFEHTAAYDSMIANYFGTLVPPYHGDTEQPSGHFPRTLNLNYIKKQDMRYGENSHQQAAFYIEEDVKEASVATAQQLQGKALSYNNIADTDAALECVKEFSEPACVIVKHANPCGVAIGDSILAAYERAYQTDPTSAFGGIIAFNRELDAATASAIISRQFVEVIIAPTVSSDALALLAAKQNVRVLTCGQWQARSAGLDFKRVNGGLLVQERDLGMVTAADLRVVSKRQPTEQELRDALFCWKVAKFVKSNAIVYARDNMTIGIGAGQMSRVYSAKIAGIKAADEGLEVAGSAMASDAFFPFRDGIDAAAAVGITCVIQPGGSIRDDEVIAAADEHSIAMIFTDMRHFRH</sequence>
<comment type="catalytic activity">
    <reaction evidence="1">
        <text>(6R)-10-formyltetrahydrofolate + 5-amino-1-(5-phospho-beta-D-ribosyl)imidazole-4-carboxamide = 5-formamido-1-(5-phospho-D-ribosyl)imidazole-4-carboxamide + (6S)-5,6,7,8-tetrahydrofolate</text>
        <dbReference type="Rhea" id="RHEA:22192"/>
        <dbReference type="ChEBI" id="CHEBI:57453"/>
        <dbReference type="ChEBI" id="CHEBI:58467"/>
        <dbReference type="ChEBI" id="CHEBI:58475"/>
        <dbReference type="ChEBI" id="CHEBI:195366"/>
        <dbReference type="EC" id="2.1.2.3"/>
    </reaction>
</comment>
<comment type="catalytic activity">
    <reaction evidence="1">
        <text>IMP + H2O = 5-formamido-1-(5-phospho-D-ribosyl)imidazole-4-carboxamide</text>
        <dbReference type="Rhea" id="RHEA:18445"/>
        <dbReference type="ChEBI" id="CHEBI:15377"/>
        <dbReference type="ChEBI" id="CHEBI:58053"/>
        <dbReference type="ChEBI" id="CHEBI:58467"/>
        <dbReference type="EC" id="3.5.4.10"/>
    </reaction>
</comment>
<comment type="pathway">
    <text evidence="1">Purine metabolism; IMP biosynthesis via de novo pathway; 5-formamido-1-(5-phospho-D-ribosyl)imidazole-4-carboxamide from 5-amino-1-(5-phospho-D-ribosyl)imidazole-4-carboxamide (10-formyl THF route): step 1/1.</text>
</comment>
<comment type="pathway">
    <text evidence="1">Purine metabolism; IMP biosynthesis via de novo pathway; IMP from 5-formamido-1-(5-phospho-D-ribosyl)imidazole-4-carboxamide: step 1/1.</text>
</comment>
<comment type="domain">
    <text evidence="1">The IMP cyclohydrolase activity resides in the N-terminal region.</text>
</comment>
<comment type="similarity">
    <text evidence="1">Belongs to the PurH family.</text>
</comment>
<dbReference type="EC" id="2.1.2.3" evidence="1"/>
<dbReference type="EC" id="3.5.4.10" evidence="1"/>
<dbReference type="EMBL" id="CP000308">
    <property type="protein sequence ID" value="ABG15563.1"/>
    <property type="molecule type" value="Genomic_DNA"/>
</dbReference>
<dbReference type="RefSeq" id="WP_002210692.1">
    <property type="nucleotide sequence ID" value="NZ_CP009906.1"/>
</dbReference>
<dbReference type="SMR" id="Q1C1V9"/>
<dbReference type="GeneID" id="57974989"/>
<dbReference type="KEGG" id="ypa:YPA_3601"/>
<dbReference type="UniPathway" id="UPA00074">
    <property type="reaction ID" value="UER00133"/>
</dbReference>
<dbReference type="UniPathway" id="UPA00074">
    <property type="reaction ID" value="UER00135"/>
</dbReference>
<dbReference type="Proteomes" id="UP000001971">
    <property type="component" value="Chromosome"/>
</dbReference>
<dbReference type="GO" id="GO:0005829">
    <property type="term" value="C:cytosol"/>
    <property type="evidence" value="ECO:0007669"/>
    <property type="project" value="TreeGrafter"/>
</dbReference>
<dbReference type="GO" id="GO:0003937">
    <property type="term" value="F:IMP cyclohydrolase activity"/>
    <property type="evidence" value="ECO:0007669"/>
    <property type="project" value="UniProtKB-UniRule"/>
</dbReference>
<dbReference type="GO" id="GO:0004643">
    <property type="term" value="F:phosphoribosylaminoimidazolecarboxamide formyltransferase activity"/>
    <property type="evidence" value="ECO:0007669"/>
    <property type="project" value="UniProtKB-UniRule"/>
</dbReference>
<dbReference type="GO" id="GO:0006189">
    <property type="term" value="P:'de novo' IMP biosynthetic process"/>
    <property type="evidence" value="ECO:0007669"/>
    <property type="project" value="UniProtKB-UniRule"/>
</dbReference>
<dbReference type="CDD" id="cd01421">
    <property type="entry name" value="IMPCH"/>
    <property type="match status" value="1"/>
</dbReference>
<dbReference type="FunFam" id="3.40.140.20:FF:000001">
    <property type="entry name" value="Bifunctional purine biosynthesis protein PurH"/>
    <property type="match status" value="1"/>
</dbReference>
<dbReference type="FunFam" id="3.40.140.20:FF:000002">
    <property type="entry name" value="Bifunctional purine biosynthesis protein PurH"/>
    <property type="match status" value="1"/>
</dbReference>
<dbReference type="FunFam" id="3.40.50.1380:FF:000001">
    <property type="entry name" value="Bifunctional purine biosynthesis protein PurH"/>
    <property type="match status" value="1"/>
</dbReference>
<dbReference type="Gene3D" id="3.40.140.20">
    <property type="match status" value="2"/>
</dbReference>
<dbReference type="Gene3D" id="3.40.50.1380">
    <property type="entry name" value="Methylglyoxal synthase-like domain"/>
    <property type="match status" value="1"/>
</dbReference>
<dbReference type="HAMAP" id="MF_00139">
    <property type="entry name" value="PurH"/>
    <property type="match status" value="1"/>
</dbReference>
<dbReference type="InterPro" id="IPR024051">
    <property type="entry name" value="AICAR_Tfase_dup_dom_sf"/>
</dbReference>
<dbReference type="InterPro" id="IPR016193">
    <property type="entry name" value="Cytidine_deaminase-like"/>
</dbReference>
<dbReference type="InterPro" id="IPR011607">
    <property type="entry name" value="MGS-like_dom"/>
</dbReference>
<dbReference type="InterPro" id="IPR036914">
    <property type="entry name" value="MGS-like_dom_sf"/>
</dbReference>
<dbReference type="InterPro" id="IPR002695">
    <property type="entry name" value="PurH-like"/>
</dbReference>
<dbReference type="NCBIfam" id="NF002049">
    <property type="entry name" value="PRK00881.1"/>
    <property type="match status" value="1"/>
</dbReference>
<dbReference type="NCBIfam" id="TIGR00355">
    <property type="entry name" value="purH"/>
    <property type="match status" value="1"/>
</dbReference>
<dbReference type="PANTHER" id="PTHR11692:SF0">
    <property type="entry name" value="BIFUNCTIONAL PURINE BIOSYNTHESIS PROTEIN ATIC"/>
    <property type="match status" value="1"/>
</dbReference>
<dbReference type="PANTHER" id="PTHR11692">
    <property type="entry name" value="BIFUNCTIONAL PURINE BIOSYNTHESIS PROTEIN PURH"/>
    <property type="match status" value="1"/>
</dbReference>
<dbReference type="Pfam" id="PF01808">
    <property type="entry name" value="AICARFT_IMPCHas"/>
    <property type="match status" value="1"/>
</dbReference>
<dbReference type="Pfam" id="PF02142">
    <property type="entry name" value="MGS"/>
    <property type="match status" value="1"/>
</dbReference>
<dbReference type="PIRSF" id="PIRSF000414">
    <property type="entry name" value="AICARFT_IMPCHas"/>
    <property type="match status" value="1"/>
</dbReference>
<dbReference type="SMART" id="SM00798">
    <property type="entry name" value="AICARFT_IMPCHas"/>
    <property type="match status" value="1"/>
</dbReference>
<dbReference type="SMART" id="SM00851">
    <property type="entry name" value="MGS"/>
    <property type="match status" value="1"/>
</dbReference>
<dbReference type="SUPFAM" id="SSF53927">
    <property type="entry name" value="Cytidine deaminase-like"/>
    <property type="match status" value="1"/>
</dbReference>
<dbReference type="SUPFAM" id="SSF52335">
    <property type="entry name" value="Methylglyoxal synthase-like"/>
    <property type="match status" value="1"/>
</dbReference>
<dbReference type="PROSITE" id="PS51855">
    <property type="entry name" value="MGS"/>
    <property type="match status" value="1"/>
</dbReference>